<evidence type="ECO:0000255" key="1">
    <source>
        <dbReference type="HAMAP-Rule" id="MF_00098"/>
    </source>
</evidence>
<reference key="1">
    <citation type="journal article" date="2006" name="Appl. Environ. Microbiol.">
        <title>Complete genome sequence of the marine, chemolithoautotrophic, ammonia-oxidizing bacterium Nitrosococcus oceani ATCC 19707.</title>
        <authorList>
            <person name="Klotz M.G."/>
            <person name="Arp D.J."/>
            <person name="Chain P.S.G."/>
            <person name="El-Sheikh A.F."/>
            <person name="Hauser L.J."/>
            <person name="Hommes N.G."/>
            <person name="Larimer F.W."/>
            <person name="Malfatti S.A."/>
            <person name="Norton J.M."/>
            <person name="Poret-Peterson A.T."/>
            <person name="Vergez L.M."/>
            <person name="Ward B.B."/>
        </authorList>
    </citation>
    <scope>NUCLEOTIDE SEQUENCE [LARGE SCALE GENOMIC DNA]</scope>
    <source>
        <strain>ATCC 19707 / BCRC 17464 / JCM 30415 / NCIMB 11848 / C-107</strain>
    </source>
</reference>
<gene>
    <name evidence="1" type="primary">metG</name>
    <name type="ordered locus">Noc_0971</name>
</gene>
<dbReference type="EC" id="6.1.1.10" evidence="1"/>
<dbReference type="EMBL" id="CP000127">
    <property type="protein sequence ID" value="ABA57481.1"/>
    <property type="molecule type" value="Genomic_DNA"/>
</dbReference>
<dbReference type="RefSeq" id="WP_002808930.1">
    <property type="nucleotide sequence ID" value="NC_007484.1"/>
</dbReference>
<dbReference type="SMR" id="Q3JCG5"/>
<dbReference type="FunCoup" id="Q3JCG5">
    <property type="interactions" value="553"/>
</dbReference>
<dbReference type="STRING" id="323261.Noc_0971"/>
<dbReference type="KEGG" id="noc:Noc_0971"/>
<dbReference type="eggNOG" id="COG0073">
    <property type="taxonomic scope" value="Bacteria"/>
</dbReference>
<dbReference type="eggNOG" id="COG0143">
    <property type="taxonomic scope" value="Bacteria"/>
</dbReference>
<dbReference type="HOGENOM" id="CLU_009710_7_0_6"/>
<dbReference type="InParanoid" id="Q3JCG5"/>
<dbReference type="Proteomes" id="UP000006838">
    <property type="component" value="Chromosome"/>
</dbReference>
<dbReference type="GO" id="GO:0005829">
    <property type="term" value="C:cytosol"/>
    <property type="evidence" value="ECO:0007669"/>
    <property type="project" value="TreeGrafter"/>
</dbReference>
<dbReference type="GO" id="GO:0005524">
    <property type="term" value="F:ATP binding"/>
    <property type="evidence" value="ECO:0007669"/>
    <property type="project" value="UniProtKB-UniRule"/>
</dbReference>
<dbReference type="GO" id="GO:0046872">
    <property type="term" value="F:metal ion binding"/>
    <property type="evidence" value="ECO:0007669"/>
    <property type="project" value="UniProtKB-KW"/>
</dbReference>
<dbReference type="GO" id="GO:0004825">
    <property type="term" value="F:methionine-tRNA ligase activity"/>
    <property type="evidence" value="ECO:0007669"/>
    <property type="project" value="UniProtKB-UniRule"/>
</dbReference>
<dbReference type="GO" id="GO:0000049">
    <property type="term" value="F:tRNA binding"/>
    <property type="evidence" value="ECO:0007669"/>
    <property type="project" value="UniProtKB-KW"/>
</dbReference>
<dbReference type="GO" id="GO:0006431">
    <property type="term" value="P:methionyl-tRNA aminoacylation"/>
    <property type="evidence" value="ECO:0007669"/>
    <property type="project" value="UniProtKB-UniRule"/>
</dbReference>
<dbReference type="CDD" id="cd07957">
    <property type="entry name" value="Anticodon_Ia_Met"/>
    <property type="match status" value="1"/>
</dbReference>
<dbReference type="CDD" id="cd00814">
    <property type="entry name" value="MetRS_core"/>
    <property type="match status" value="1"/>
</dbReference>
<dbReference type="CDD" id="cd02800">
    <property type="entry name" value="tRNA_bind_EcMetRS_like"/>
    <property type="match status" value="1"/>
</dbReference>
<dbReference type="FunFam" id="1.10.730.10:FF:000005">
    <property type="entry name" value="Methionine--tRNA ligase"/>
    <property type="match status" value="1"/>
</dbReference>
<dbReference type="FunFam" id="2.20.28.20:FF:000001">
    <property type="entry name" value="Methionine--tRNA ligase"/>
    <property type="match status" value="1"/>
</dbReference>
<dbReference type="FunFam" id="2.40.50.140:FF:000042">
    <property type="entry name" value="Methionine--tRNA ligase"/>
    <property type="match status" value="1"/>
</dbReference>
<dbReference type="Gene3D" id="3.40.50.620">
    <property type="entry name" value="HUPs"/>
    <property type="match status" value="1"/>
</dbReference>
<dbReference type="Gene3D" id="1.10.730.10">
    <property type="entry name" value="Isoleucyl-tRNA Synthetase, Domain 1"/>
    <property type="match status" value="1"/>
</dbReference>
<dbReference type="Gene3D" id="2.20.28.20">
    <property type="entry name" value="Methionyl-tRNA synthetase, Zn-domain"/>
    <property type="match status" value="1"/>
</dbReference>
<dbReference type="Gene3D" id="2.40.50.140">
    <property type="entry name" value="Nucleic acid-binding proteins"/>
    <property type="match status" value="1"/>
</dbReference>
<dbReference type="HAMAP" id="MF_00098">
    <property type="entry name" value="Met_tRNA_synth_type1"/>
    <property type="match status" value="1"/>
</dbReference>
<dbReference type="InterPro" id="IPR001412">
    <property type="entry name" value="aa-tRNA-synth_I_CS"/>
</dbReference>
<dbReference type="InterPro" id="IPR041872">
    <property type="entry name" value="Anticodon_Met"/>
</dbReference>
<dbReference type="InterPro" id="IPR004495">
    <property type="entry name" value="Met-tRNA-synth_bsu_C"/>
</dbReference>
<dbReference type="InterPro" id="IPR023458">
    <property type="entry name" value="Met-tRNA_ligase_1"/>
</dbReference>
<dbReference type="InterPro" id="IPR014758">
    <property type="entry name" value="Met-tRNA_synth"/>
</dbReference>
<dbReference type="InterPro" id="IPR015413">
    <property type="entry name" value="Methionyl/Leucyl_tRNA_Synth"/>
</dbReference>
<dbReference type="InterPro" id="IPR033911">
    <property type="entry name" value="MetRS_core"/>
</dbReference>
<dbReference type="InterPro" id="IPR029038">
    <property type="entry name" value="MetRS_Zn"/>
</dbReference>
<dbReference type="InterPro" id="IPR012340">
    <property type="entry name" value="NA-bd_OB-fold"/>
</dbReference>
<dbReference type="InterPro" id="IPR014729">
    <property type="entry name" value="Rossmann-like_a/b/a_fold"/>
</dbReference>
<dbReference type="InterPro" id="IPR002547">
    <property type="entry name" value="tRNA-bd_dom"/>
</dbReference>
<dbReference type="InterPro" id="IPR009080">
    <property type="entry name" value="tRNAsynth_Ia_anticodon-bd"/>
</dbReference>
<dbReference type="NCBIfam" id="TIGR00398">
    <property type="entry name" value="metG"/>
    <property type="match status" value="1"/>
</dbReference>
<dbReference type="NCBIfam" id="TIGR00399">
    <property type="entry name" value="metG_C_term"/>
    <property type="match status" value="1"/>
</dbReference>
<dbReference type="NCBIfam" id="NF001100">
    <property type="entry name" value="PRK00133.1"/>
    <property type="match status" value="1"/>
</dbReference>
<dbReference type="PANTHER" id="PTHR45765">
    <property type="entry name" value="METHIONINE--TRNA LIGASE"/>
    <property type="match status" value="1"/>
</dbReference>
<dbReference type="PANTHER" id="PTHR45765:SF1">
    <property type="entry name" value="METHIONINE--TRNA LIGASE, CYTOPLASMIC"/>
    <property type="match status" value="1"/>
</dbReference>
<dbReference type="Pfam" id="PF19303">
    <property type="entry name" value="Anticodon_3"/>
    <property type="match status" value="1"/>
</dbReference>
<dbReference type="Pfam" id="PF09334">
    <property type="entry name" value="tRNA-synt_1g"/>
    <property type="match status" value="1"/>
</dbReference>
<dbReference type="Pfam" id="PF01588">
    <property type="entry name" value="tRNA_bind"/>
    <property type="match status" value="1"/>
</dbReference>
<dbReference type="PRINTS" id="PR01041">
    <property type="entry name" value="TRNASYNTHMET"/>
</dbReference>
<dbReference type="SUPFAM" id="SSF47323">
    <property type="entry name" value="Anticodon-binding domain of a subclass of class I aminoacyl-tRNA synthetases"/>
    <property type="match status" value="1"/>
</dbReference>
<dbReference type="SUPFAM" id="SSF57770">
    <property type="entry name" value="Methionyl-tRNA synthetase (MetRS), Zn-domain"/>
    <property type="match status" value="1"/>
</dbReference>
<dbReference type="SUPFAM" id="SSF50249">
    <property type="entry name" value="Nucleic acid-binding proteins"/>
    <property type="match status" value="1"/>
</dbReference>
<dbReference type="SUPFAM" id="SSF52374">
    <property type="entry name" value="Nucleotidylyl transferase"/>
    <property type="match status" value="1"/>
</dbReference>
<dbReference type="PROSITE" id="PS00178">
    <property type="entry name" value="AA_TRNA_LIGASE_I"/>
    <property type="match status" value="1"/>
</dbReference>
<dbReference type="PROSITE" id="PS50886">
    <property type="entry name" value="TRBD"/>
    <property type="match status" value="1"/>
</dbReference>
<comment type="function">
    <text evidence="1">Is required not only for elongation of protein synthesis but also for the initiation of all mRNA translation through initiator tRNA(fMet) aminoacylation.</text>
</comment>
<comment type="catalytic activity">
    <reaction evidence="1">
        <text>tRNA(Met) + L-methionine + ATP = L-methionyl-tRNA(Met) + AMP + diphosphate</text>
        <dbReference type="Rhea" id="RHEA:13481"/>
        <dbReference type="Rhea" id="RHEA-COMP:9667"/>
        <dbReference type="Rhea" id="RHEA-COMP:9698"/>
        <dbReference type="ChEBI" id="CHEBI:30616"/>
        <dbReference type="ChEBI" id="CHEBI:33019"/>
        <dbReference type="ChEBI" id="CHEBI:57844"/>
        <dbReference type="ChEBI" id="CHEBI:78442"/>
        <dbReference type="ChEBI" id="CHEBI:78530"/>
        <dbReference type="ChEBI" id="CHEBI:456215"/>
        <dbReference type="EC" id="6.1.1.10"/>
    </reaction>
</comment>
<comment type="cofactor">
    <cofactor evidence="1">
        <name>Zn(2+)</name>
        <dbReference type="ChEBI" id="CHEBI:29105"/>
    </cofactor>
    <text evidence="1">Binds 1 zinc ion per subunit.</text>
</comment>
<comment type="subunit">
    <text evidence="1">Homodimer.</text>
</comment>
<comment type="subcellular location">
    <subcellularLocation>
        <location evidence="1">Cytoplasm</location>
    </subcellularLocation>
</comment>
<comment type="similarity">
    <text evidence="1">Belongs to the class-I aminoacyl-tRNA synthetase family. MetG type 1 subfamily.</text>
</comment>
<organism>
    <name type="scientific">Nitrosococcus oceani (strain ATCC 19707 / BCRC 17464 / JCM 30415 / NCIMB 11848 / C-107)</name>
    <dbReference type="NCBI Taxonomy" id="323261"/>
    <lineage>
        <taxon>Bacteria</taxon>
        <taxon>Pseudomonadati</taxon>
        <taxon>Pseudomonadota</taxon>
        <taxon>Gammaproteobacteria</taxon>
        <taxon>Chromatiales</taxon>
        <taxon>Chromatiaceae</taxon>
        <taxon>Nitrosococcus</taxon>
    </lineage>
</organism>
<name>SYM_NITOC</name>
<proteinExistence type="inferred from homology"/>
<keyword id="KW-0030">Aminoacyl-tRNA synthetase</keyword>
<keyword id="KW-0067">ATP-binding</keyword>
<keyword id="KW-0963">Cytoplasm</keyword>
<keyword id="KW-0436">Ligase</keyword>
<keyword id="KW-0479">Metal-binding</keyword>
<keyword id="KW-0547">Nucleotide-binding</keyword>
<keyword id="KW-0648">Protein biosynthesis</keyword>
<keyword id="KW-1185">Reference proteome</keyword>
<keyword id="KW-0694">RNA-binding</keyword>
<keyword id="KW-0820">tRNA-binding</keyword>
<keyword id="KW-0862">Zinc</keyword>
<accession>Q3JCG5</accession>
<protein>
    <recommendedName>
        <fullName evidence="1">Methionine--tRNA ligase</fullName>
        <ecNumber evidence="1">6.1.1.10</ecNumber>
    </recommendedName>
    <alternativeName>
        <fullName evidence="1">Methionyl-tRNA synthetase</fullName>
        <shortName evidence="1">MetRS</shortName>
    </alternativeName>
</protein>
<feature type="chain" id="PRO_0000331855" description="Methionine--tRNA ligase">
    <location>
        <begin position="1"/>
        <end position="674"/>
    </location>
</feature>
<feature type="domain" description="tRNA-binding" evidence="1">
    <location>
        <begin position="573"/>
        <end position="674"/>
    </location>
</feature>
<feature type="short sequence motif" description="'HIGH' region">
    <location>
        <begin position="12"/>
        <end position="22"/>
    </location>
</feature>
<feature type="short sequence motif" description="'KMSKS' region">
    <location>
        <begin position="328"/>
        <end position="332"/>
    </location>
</feature>
<feature type="binding site" evidence="1">
    <location>
        <position position="143"/>
    </location>
    <ligand>
        <name>Zn(2+)</name>
        <dbReference type="ChEBI" id="CHEBI:29105"/>
    </ligand>
</feature>
<feature type="binding site" evidence="1">
    <location>
        <position position="146"/>
    </location>
    <ligand>
        <name>Zn(2+)</name>
        <dbReference type="ChEBI" id="CHEBI:29105"/>
    </ligand>
</feature>
<feature type="binding site" evidence="1">
    <location>
        <position position="156"/>
    </location>
    <ligand>
        <name>Zn(2+)</name>
        <dbReference type="ChEBI" id="CHEBI:29105"/>
    </ligand>
</feature>
<feature type="binding site" evidence="1">
    <location>
        <position position="159"/>
    </location>
    <ligand>
        <name>Zn(2+)</name>
        <dbReference type="ChEBI" id="CHEBI:29105"/>
    </ligand>
</feature>
<feature type="binding site" evidence="1">
    <location>
        <position position="331"/>
    </location>
    <ligand>
        <name>ATP</name>
        <dbReference type="ChEBI" id="CHEBI:30616"/>
    </ligand>
</feature>
<sequence length="674" mass="76926">MPRRILVTSALPYANGPIHLGHLVEYIQTDIWVRFQRMRGHECYYVCADDAHGTPIMLRAQQEGVTPETLIDQCSQEHQADFADFAISFDSYHSTHSAENRTLSETIYLRNRDKGHITTRIVRQAYDPVKGMFLPDRFIRGTCPRCDALDQYGDNCEVCGATYSPTELKEAISVLSGTPPIERESEHYFFKLNDFEPLLKRWTQGGHLQPEMANKLNEWFEAGLQDWDISRDAPYFGFPIPESTDKYFYVWLDAPIGYLASFKHLCDREGLDFDSFMTPHSTAELYHFIGKDILYFHALFWPAMLHGAGFRLPTAIFAHGFLTVNGQKMSKSRGTFIKARTYLKHLNPEYLRYYFAAKLGSGIEDLDLNFDDFMSRVNADLVGKVINIASRCAGFINKHFQNRLADRLVEKSLFQKFVAASEHLAQHYEAREFGHAMREIMALADQANRYIDEQQPWVAIKDPERKQEVQEVCTLGLNLFRQLMIYLKPVLPMTTEKAEAFFNSQSLTWSDVDTPLLNHTINRFEPLMIRAEKIKIEAMIEDSKEHLQQNTNAVKPTALLAEHPIAETIQFESFAKLDLRIARILKAEQVEGADKLLRLELDLDGETRQVFAGIKAAYAPESLVGRLTVMVANLAPRKMRFGISEGMVLAAGPGGKEIYLLNPDEGARPGMRVK</sequence>